<dbReference type="EC" id="3.6.1.66" evidence="1"/>
<dbReference type="EMBL" id="CP000923">
    <property type="protein sequence ID" value="ABY91860.1"/>
    <property type="molecule type" value="Genomic_DNA"/>
</dbReference>
<dbReference type="RefSeq" id="WP_009053039.1">
    <property type="nucleotide sequence ID" value="NC_010320.1"/>
</dbReference>
<dbReference type="SMR" id="B0K3T5"/>
<dbReference type="KEGG" id="tex:Teth514_0552"/>
<dbReference type="HOGENOM" id="CLU_082080_0_2_9"/>
<dbReference type="Proteomes" id="UP000002155">
    <property type="component" value="Chromosome"/>
</dbReference>
<dbReference type="GO" id="GO:0005829">
    <property type="term" value="C:cytosol"/>
    <property type="evidence" value="ECO:0007669"/>
    <property type="project" value="TreeGrafter"/>
</dbReference>
<dbReference type="GO" id="GO:0035870">
    <property type="term" value="F:dITP diphosphatase activity"/>
    <property type="evidence" value="ECO:0007669"/>
    <property type="project" value="RHEA"/>
</dbReference>
<dbReference type="GO" id="GO:0036220">
    <property type="term" value="F:ITP diphosphatase activity"/>
    <property type="evidence" value="ECO:0007669"/>
    <property type="project" value="UniProtKB-EC"/>
</dbReference>
<dbReference type="GO" id="GO:0046872">
    <property type="term" value="F:metal ion binding"/>
    <property type="evidence" value="ECO:0007669"/>
    <property type="project" value="UniProtKB-KW"/>
</dbReference>
<dbReference type="GO" id="GO:0000166">
    <property type="term" value="F:nucleotide binding"/>
    <property type="evidence" value="ECO:0007669"/>
    <property type="project" value="UniProtKB-KW"/>
</dbReference>
<dbReference type="GO" id="GO:0017111">
    <property type="term" value="F:ribonucleoside triphosphate phosphatase activity"/>
    <property type="evidence" value="ECO:0007669"/>
    <property type="project" value="InterPro"/>
</dbReference>
<dbReference type="GO" id="GO:0036222">
    <property type="term" value="F:XTP diphosphatase activity"/>
    <property type="evidence" value="ECO:0007669"/>
    <property type="project" value="RHEA"/>
</dbReference>
<dbReference type="GO" id="GO:0009117">
    <property type="term" value="P:nucleotide metabolic process"/>
    <property type="evidence" value="ECO:0007669"/>
    <property type="project" value="UniProtKB-KW"/>
</dbReference>
<dbReference type="GO" id="GO:0009146">
    <property type="term" value="P:purine nucleoside triphosphate catabolic process"/>
    <property type="evidence" value="ECO:0007669"/>
    <property type="project" value="UniProtKB-UniRule"/>
</dbReference>
<dbReference type="CDD" id="cd00515">
    <property type="entry name" value="HAM1"/>
    <property type="match status" value="1"/>
</dbReference>
<dbReference type="FunFam" id="3.90.950.10:FF:000001">
    <property type="entry name" value="dITP/XTP pyrophosphatase"/>
    <property type="match status" value="1"/>
</dbReference>
<dbReference type="Gene3D" id="3.90.950.10">
    <property type="match status" value="1"/>
</dbReference>
<dbReference type="HAMAP" id="MF_01405">
    <property type="entry name" value="Non_canon_purine_NTPase"/>
    <property type="match status" value="1"/>
</dbReference>
<dbReference type="InterPro" id="IPR020922">
    <property type="entry name" value="dITP/XTP_pyrophosphatase"/>
</dbReference>
<dbReference type="InterPro" id="IPR029001">
    <property type="entry name" value="ITPase-like_fam"/>
</dbReference>
<dbReference type="InterPro" id="IPR002637">
    <property type="entry name" value="RdgB/HAM1"/>
</dbReference>
<dbReference type="NCBIfam" id="NF011397">
    <property type="entry name" value="PRK14822.1"/>
    <property type="match status" value="1"/>
</dbReference>
<dbReference type="NCBIfam" id="TIGR00042">
    <property type="entry name" value="RdgB/HAM1 family non-canonical purine NTP pyrophosphatase"/>
    <property type="match status" value="1"/>
</dbReference>
<dbReference type="PANTHER" id="PTHR11067:SF9">
    <property type="entry name" value="INOSINE TRIPHOSPHATE PYROPHOSPHATASE"/>
    <property type="match status" value="1"/>
</dbReference>
<dbReference type="PANTHER" id="PTHR11067">
    <property type="entry name" value="INOSINE TRIPHOSPHATE PYROPHOSPHATASE/HAM1 PROTEIN"/>
    <property type="match status" value="1"/>
</dbReference>
<dbReference type="Pfam" id="PF01725">
    <property type="entry name" value="Ham1p_like"/>
    <property type="match status" value="1"/>
</dbReference>
<dbReference type="SUPFAM" id="SSF52972">
    <property type="entry name" value="ITPase-like"/>
    <property type="match status" value="1"/>
</dbReference>
<feature type="chain" id="PRO_1000145501" description="dITP/XTP pyrophosphatase">
    <location>
        <begin position="1"/>
        <end position="198"/>
    </location>
</feature>
<feature type="active site" description="Proton acceptor" evidence="1">
    <location>
        <position position="69"/>
    </location>
</feature>
<feature type="binding site" evidence="1">
    <location>
        <begin position="7"/>
        <end position="12"/>
    </location>
    <ligand>
        <name>substrate</name>
    </ligand>
</feature>
<feature type="binding site" evidence="1">
    <location>
        <position position="40"/>
    </location>
    <ligand>
        <name>Mg(2+)</name>
        <dbReference type="ChEBI" id="CHEBI:18420"/>
    </ligand>
</feature>
<feature type="binding site" evidence="1">
    <location>
        <position position="69"/>
    </location>
    <ligand>
        <name>Mg(2+)</name>
        <dbReference type="ChEBI" id="CHEBI:18420"/>
    </ligand>
</feature>
<feature type="binding site" evidence="1">
    <location>
        <position position="70"/>
    </location>
    <ligand>
        <name>substrate</name>
    </ligand>
</feature>
<feature type="binding site" evidence="1">
    <location>
        <begin position="151"/>
        <end position="154"/>
    </location>
    <ligand>
        <name>substrate</name>
    </ligand>
</feature>
<feature type="binding site" evidence="1">
    <location>
        <position position="174"/>
    </location>
    <ligand>
        <name>substrate</name>
    </ligand>
</feature>
<feature type="binding site" evidence="1">
    <location>
        <begin position="179"/>
        <end position="180"/>
    </location>
    <ligand>
        <name>substrate</name>
    </ligand>
</feature>
<accession>B0K3T5</accession>
<evidence type="ECO:0000255" key="1">
    <source>
        <dbReference type="HAMAP-Rule" id="MF_01405"/>
    </source>
</evidence>
<gene>
    <name type="ordered locus">Teth514_0552</name>
</gene>
<protein>
    <recommendedName>
        <fullName evidence="1">dITP/XTP pyrophosphatase</fullName>
        <ecNumber evidence="1">3.6.1.66</ecNumber>
    </recommendedName>
    <alternativeName>
        <fullName evidence="1">Non-canonical purine NTP pyrophosphatase</fullName>
    </alternativeName>
    <alternativeName>
        <fullName evidence="1">Non-standard purine NTP pyrophosphatase</fullName>
    </alternativeName>
    <alternativeName>
        <fullName evidence="1">Nucleoside-triphosphate diphosphatase</fullName>
    </alternativeName>
    <alternativeName>
        <fullName evidence="1">Nucleoside-triphosphate pyrophosphatase</fullName>
        <shortName evidence="1">NTPase</shortName>
    </alternativeName>
</protein>
<reference key="1">
    <citation type="submission" date="2008-01" db="EMBL/GenBank/DDBJ databases">
        <title>Complete sequence of Thermoanaerobacter sp. X514.</title>
        <authorList>
            <consortium name="US DOE Joint Genome Institute"/>
            <person name="Copeland A."/>
            <person name="Lucas S."/>
            <person name="Lapidus A."/>
            <person name="Barry K."/>
            <person name="Glavina del Rio T."/>
            <person name="Dalin E."/>
            <person name="Tice H."/>
            <person name="Pitluck S."/>
            <person name="Bruce D."/>
            <person name="Goodwin L."/>
            <person name="Saunders E."/>
            <person name="Brettin T."/>
            <person name="Detter J.C."/>
            <person name="Han C."/>
            <person name="Schmutz J."/>
            <person name="Larimer F."/>
            <person name="Land M."/>
            <person name="Hauser L."/>
            <person name="Kyrpides N."/>
            <person name="Kim E."/>
            <person name="Hemme C."/>
            <person name="Fields M.W."/>
            <person name="He Z."/>
            <person name="Zhou J."/>
            <person name="Richardson P."/>
        </authorList>
    </citation>
    <scope>NUCLEOTIDE SEQUENCE [LARGE SCALE GENOMIC DNA]</scope>
    <source>
        <strain>X514</strain>
    </source>
</reference>
<keyword id="KW-0378">Hydrolase</keyword>
<keyword id="KW-0460">Magnesium</keyword>
<keyword id="KW-0479">Metal-binding</keyword>
<keyword id="KW-0546">Nucleotide metabolism</keyword>
<keyword id="KW-0547">Nucleotide-binding</keyword>
<sequence>MKIIIATHNPHKTEEIKNFFKGYPVEIYSMADLGIKEDIEETGDTIEENALIKARFLKEKVDGIVIADDTGLFVEHLNGQPGVYSARFAGENATYEDNNKKLLKLLEGVPYEKRKAYFKTVIAVVEREKETLLEGKLEGHILDHPRGKNGFGYDPVFYVDNLGKSLAELTMEEKNKISHRADALMKLKNYILKRLEEK</sequence>
<organism>
    <name type="scientific">Thermoanaerobacter sp. (strain X514)</name>
    <dbReference type="NCBI Taxonomy" id="399726"/>
    <lineage>
        <taxon>Bacteria</taxon>
        <taxon>Bacillati</taxon>
        <taxon>Bacillota</taxon>
        <taxon>Clostridia</taxon>
        <taxon>Thermoanaerobacterales</taxon>
        <taxon>Thermoanaerobacteraceae</taxon>
        <taxon>Thermoanaerobacter</taxon>
    </lineage>
</organism>
<comment type="function">
    <text evidence="1">Pyrophosphatase that catalyzes the hydrolysis of nucleoside triphosphates to their monophosphate derivatives, with a high preference for the non-canonical purine nucleotides XTP (xanthosine triphosphate), dITP (deoxyinosine triphosphate) and ITP. Seems to function as a house-cleaning enzyme that removes non-canonical purine nucleotides from the nucleotide pool, thus preventing their incorporation into DNA/RNA and avoiding chromosomal lesions.</text>
</comment>
<comment type="catalytic activity">
    <reaction evidence="1">
        <text>XTP + H2O = XMP + diphosphate + H(+)</text>
        <dbReference type="Rhea" id="RHEA:28610"/>
        <dbReference type="ChEBI" id="CHEBI:15377"/>
        <dbReference type="ChEBI" id="CHEBI:15378"/>
        <dbReference type="ChEBI" id="CHEBI:33019"/>
        <dbReference type="ChEBI" id="CHEBI:57464"/>
        <dbReference type="ChEBI" id="CHEBI:61314"/>
        <dbReference type="EC" id="3.6.1.66"/>
    </reaction>
</comment>
<comment type="catalytic activity">
    <reaction evidence="1">
        <text>dITP + H2O = dIMP + diphosphate + H(+)</text>
        <dbReference type="Rhea" id="RHEA:28342"/>
        <dbReference type="ChEBI" id="CHEBI:15377"/>
        <dbReference type="ChEBI" id="CHEBI:15378"/>
        <dbReference type="ChEBI" id="CHEBI:33019"/>
        <dbReference type="ChEBI" id="CHEBI:61194"/>
        <dbReference type="ChEBI" id="CHEBI:61382"/>
        <dbReference type="EC" id="3.6.1.66"/>
    </reaction>
</comment>
<comment type="catalytic activity">
    <reaction evidence="1">
        <text>ITP + H2O = IMP + diphosphate + H(+)</text>
        <dbReference type="Rhea" id="RHEA:29399"/>
        <dbReference type="ChEBI" id="CHEBI:15377"/>
        <dbReference type="ChEBI" id="CHEBI:15378"/>
        <dbReference type="ChEBI" id="CHEBI:33019"/>
        <dbReference type="ChEBI" id="CHEBI:58053"/>
        <dbReference type="ChEBI" id="CHEBI:61402"/>
        <dbReference type="EC" id="3.6.1.66"/>
    </reaction>
</comment>
<comment type="cofactor">
    <cofactor evidence="1">
        <name>Mg(2+)</name>
        <dbReference type="ChEBI" id="CHEBI:18420"/>
    </cofactor>
    <text evidence="1">Binds 1 Mg(2+) ion per subunit.</text>
</comment>
<comment type="subunit">
    <text evidence="1">Homodimer.</text>
</comment>
<comment type="similarity">
    <text evidence="1">Belongs to the HAM1 NTPase family.</text>
</comment>
<proteinExistence type="inferred from homology"/>
<name>IXTPA_THEPX</name>